<gene>
    <name evidence="1" type="primary">carB</name>
    <name type="ordered locus">TV0817</name>
    <name type="ORF">TVG0823863</name>
</gene>
<proteinExistence type="inferred from homology"/>
<organism>
    <name type="scientific">Thermoplasma volcanium (strain ATCC 51530 / DSM 4299 / JCM 9571 / NBRC 15438 / GSS1)</name>
    <dbReference type="NCBI Taxonomy" id="273116"/>
    <lineage>
        <taxon>Archaea</taxon>
        <taxon>Methanobacteriati</taxon>
        <taxon>Thermoplasmatota</taxon>
        <taxon>Thermoplasmata</taxon>
        <taxon>Thermoplasmatales</taxon>
        <taxon>Thermoplasmataceae</taxon>
        <taxon>Thermoplasma</taxon>
    </lineage>
</organism>
<accession>Q97AJ3</accession>
<protein>
    <recommendedName>
        <fullName evidence="1">Carbamoyl phosphate synthase large chain</fullName>
        <ecNumber evidence="1">6.3.4.16</ecNumber>
        <ecNumber evidence="1">6.3.5.5</ecNumber>
    </recommendedName>
    <alternativeName>
        <fullName evidence="1">Carbamoyl phosphate synthetase ammonia chain</fullName>
    </alternativeName>
</protein>
<keyword id="KW-0028">Amino-acid biosynthesis</keyword>
<keyword id="KW-0055">Arginine biosynthesis</keyword>
<keyword id="KW-0067">ATP-binding</keyword>
<keyword id="KW-0436">Ligase</keyword>
<keyword id="KW-0460">Magnesium</keyword>
<keyword id="KW-0464">Manganese</keyword>
<keyword id="KW-0479">Metal-binding</keyword>
<keyword id="KW-0547">Nucleotide-binding</keyword>
<keyword id="KW-0665">Pyrimidine biosynthesis</keyword>
<keyword id="KW-0677">Repeat</keyword>
<sequence length="1044" mass="116771">MPKREDISKILVIGSGPVVIGQAAEFDYSASQACRSLREEGYEVVLLNSNPATIQTDHEIADRVYIEPITVEAVETIIRKEEIDAIEPHMGGQTALNLVVSLKKMGIIDKYGIKIIGTPVESIEISEDRQKFHDFLISIGERDPERYRISRSNYKEEIEKIPFMPVIVRTSFSLGGSGGNIVKTKEELKAYAEELFRGIDEDYIEVNRSLAGLKELEYEMIRDSIGNCITVCNMENLDPMGVHTGESIVVTPSQTLSDIQYHMLRDAAIKIVSGLGIVGACNIQFALDGNDYYVVEVNPRTSRSSALASKATGYPIARIAAKIAVGYNLTEIRNPITKNTFAAFEPSLDYVTVKIPRWPFDKFSVDRTIGVQMKSIGEVMGIGRTFEEALMKAIASLDIDLSYRLRLYVSDEEIWNLVRTPNDRRIFAIFEALFRDFPVDRIMEESMYDRYFIEKMQNIVDYLKTLEFGHIPENLISLKKLGISDEIIGRTCGIDPDEITRYRITNRILPVFKEIDTCSGEFEVIAPYLYSTYEDEDELPGISGFVAIIGSGPNRIAQGLEFDYGAVKAITALRKMGVGSVMINSNPETVSTDFDVSDALFFEPITVEHVSNILAKANLRGLIVQFSGQTGQNIARRIENVLGSSVVMGTSSESIDRIEDRSLFSKRLEAMGIDQPKFEVATNAEEAINKSLALGLPVILRASHVIGGRAMDIIYDYDFLVERSREVFENVNSVLVSKYLENAVEIDVDFVSNGEDFQICGILVHIEEAGVHSGDATMIFGPKIVPQAAEEKIKSIVGKLVREFNLIGISNLQAAIKDDEVYVIELNARSSRSIPFISKATGYNWVELAVSAIMTGKLEKVSVSSKGYFVKVSVFPFSKFNDMDVSLGPEMKSTGEAMYPGFTMEEAIRKSILRDIKSVFISVRDDDKPRIIEAASIMKQNGLKIYATMGTSRYLRERGIECETVYRIKDERKPRIYDMILAGYIDLVINTPEMNAGSVRDGFKIRRLCVRKGIPLVTNINLANAYSKCLSYTNIDYREISSYH</sequence>
<reference key="1">
    <citation type="journal article" date="2000" name="Proc. Natl. Acad. Sci. U.S.A.">
        <title>Archaeal adaptation to higher temperatures revealed by genomic sequence of Thermoplasma volcanium.</title>
        <authorList>
            <person name="Kawashima T."/>
            <person name="Amano N."/>
            <person name="Koike H."/>
            <person name="Makino S."/>
            <person name="Higuchi S."/>
            <person name="Kawashima-Ohya Y."/>
            <person name="Watanabe K."/>
            <person name="Yamazaki M."/>
            <person name="Kanehori K."/>
            <person name="Kawamoto T."/>
            <person name="Nunoshiba T."/>
            <person name="Yamamoto Y."/>
            <person name="Aramaki H."/>
            <person name="Makino K."/>
            <person name="Suzuki M."/>
        </authorList>
    </citation>
    <scope>NUCLEOTIDE SEQUENCE [LARGE SCALE GENOMIC DNA]</scope>
    <source>
        <strain>ATCC 51530 / DSM 4299 / JCM 9571 / NBRC 15438 / GSS1</strain>
    </source>
</reference>
<feature type="chain" id="PRO_0000145087" description="Carbamoyl phosphate synthase large chain">
    <location>
        <begin position="1"/>
        <end position="1044"/>
    </location>
</feature>
<feature type="domain" description="ATP-grasp 1" evidence="1">
    <location>
        <begin position="133"/>
        <end position="325"/>
    </location>
</feature>
<feature type="domain" description="ATP-grasp 2" evidence="1">
    <location>
        <begin position="665"/>
        <end position="854"/>
    </location>
</feature>
<feature type="domain" description="MGS-like" evidence="1">
    <location>
        <begin position="911"/>
        <end position="1044"/>
    </location>
</feature>
<feature type="region of interest" description="Carboxyphosphate synthetic domain" evidence="1">
    <location>
        <begin position="1"/>
        <end position="398"/>
    </location>
</feature>
<feature type="region of interest" description="Oligomerization domain" evidence="1">
    <location>
        <begin position="399"/>
        <end position="539"/>
    </location>
</feature>
<feature type="region of interest" description="Carbamoyl phosphate synthetic domain" evidence="1">
    <location>
        <begin position="540"/>
        <end position="916"/>
    </location>
</feature>
<feature type="region of interest" description="Allosteric domain" evidence="1">
    <location>
        <begin position="916"/>
        <end position="1044"/>
    </location>
</feature>
<feature type="binding site" evidence="1">
    <location>
        <position position="129"/>
    </location>
    <ligand>
        <name>ATP</name>
        <dbReference type="ChEBI" id="CHEBI:30616"/>
        <label>1</label>
    </ligand>
</feature>
<feature type="binding site" evidence="1">
    <location>
        <position position="169"/>
    </location>
    <ligand>
        <name>ATP</name>
        <dbReference type="ChEBI" id="CHEBI:30616"/>
        <label>1</label>
    </ligand>
</feature>
<feature type="binding site" evidence="1">
    <location>
        <position position="175"/>
    </location>
    <ligand>
        <name>ATP</name>
        <dbReference type="ChEBI" id="CHEBI:30616"/>
        <label>1</label>
    </ligand>
</feature>
<feature type="binding site" evidence="1">
    <location>
        <position position="176"/>
    </location>
    <ligand>
        <name>ATP</name>
        <dbReference type="ChEBI" id="CHEBI:30616"/>
        <label>1</label>
    </ligand>
</feature>
<feature type="binding site" evidence="1">
    <location>
        <position position="208"/>
    </location>
    <ligand>
        <name>ATP</name>
        <dbReference type="ChEBI" id="CHEBI:30616"/>
        <label>1</label>
    </ligand>
</feature>
<feature type="binding site" evidence="1">
    <location>
        <position position="210"/>
    </location>
    <ligand>
        <name>ATP</name>
        <dbReference type="ChEBI" id="CHEBI:30616"/>
        <label>1</label>
    </ligand>
</feature>
<feature type="binding site" evidence="1">
    <location>
        <position position="215"/>
    </location>
    <ligand>
        <name>ATP</name>
        <dbReference type="ChEBI" id="CHEBI:30616"/>
        <label>1</label>
    </ligand>
</feature>
<feature type="binding site" evidence="1">
    <location>
        <position position="241"/>
    </location>
    <ligand>
        <name>ATP</name>
        <dbReference type="ChEBI" id="CHEBI:30616"/>
        <label>1</label>
    </ligand>
</feature>
<feature type="binding site" evidence="1">
    <location>
        <position position="242"/>
    </location>
    <ligand>
        <name>ATP</name>
        <dbReference type="ChEBI" id="CHEBI:30616"/>
        <label>1</label>
    </ligand>
</feature>
<feature type="binding site" evidence="1">
    <location>
        <position position="243"/>
    </location>
    <ligand>
        <name>ATP</name>
        <dbReference type="ChEBI" id="CHEBI:30616"/>
        <label>1</label>
    </ligand>
</feature>
<feature type="binding site" evidence="1">
    <location>
        <position position="284"/>
    </location>
    <ligand>
        <name>ATP</name>
        <dbReference type="ChEBI" id="CHEBI:30616"/>
        <label>1</label>
    </ligand>
</feature>
<feature type="binding site" evidence="1">
    <location>
        <position position="284"/>
    </location>
    <ligand>
        <name>Mg(2+)</name>
        <dbReference type="ChEBI" id="CHEBI:18420"/>
        <label>1</label>
    </ligand>
</feature>
<feature type="binding site" evidence="1">
    <location>
        <position position="284"/>
    </location>
    <ligand>
        <name>Mn(2+)</name>
        <dbReference type="ChEBI" id="CHEBI:29035"/>
        <label>1</label>
    </ligand>
</feature>
<feature type="binding site" evidence="1">
    <location>
        <position position="296"/>
    </location>
    <ligand>
        <name>ATP</name>
        <dbReference type="ChEBI" id="CHEBI:30616"/>
        <label>1</label>
    </ligand>
</feature>
<feature type="binding site" evidence="1">
    <location>
        <position position="296"/>
    </location>
    <ligand>
        <name>Mg(2+)</name>
        <dbReference type="ChEBI" id="CHEBI:18420"/>
        <label>1</label>
    </ligand>
</feature>
<feature type="binding site" evidence="1">
    <location>
        <position position="296"/>
    </location>
    <ligand>
        <name>Mg(2+)</name>
        <dbReference type="ChEBI" id="CHEBI:18420"/>
        <label>2</label>
    </ligand>
</feature>
<feature type="binding site" evidence="1">
    <location>
        <position position="296"/>
    </location>
    <ligand>
        <name>Mn(2+)</name>
        <dbReference type="ChEBI" id="CHEBI:29035"/>
        <label>1</label>
    </ligand>
</feature>
<feature type="binding site" evidence="1">
    <location>
        <position position="296"/>
    </location>
    <ligand>
        <name>Mn(2+)</name>
        <dbReference type="ChEBI" id="CHEBI:29035"/>
        <label>2</label>
    </ligand>
</feature>
<feature type="binding site" evidence="1">
    <location>
        <position position="298"/>
    </location>
    <ligand>
        <name>Mg(2+)</name>
        <dbReference type="ChEBI" id="CHEBI:18420"/>
        <label>2</label>
    </ligand>
</feature>
<feature type="binding site" evidence="1">
    <location>
        <position position="298"/>
    </location>
    <ligand>
        <name>Mn(2+)</name>
        <dbReference type="ChEBI" id="CHEBI:29035"/>
        <label>2</label>
    </ligand>
</feature>
<feature type="binding site" evidence="1">
    <location>
        <position position="701"/>
    </location>
    <ligand>
        <name>ATP</name>
        <dbReference type="ChEBI" id="CHEBI:30616"/>
        <label>2</label>
    </ligand>
</feature>
<feature type="binding site" evidence="1">
    <location>
        <position position="738"/>
    </location>
    <ligand>
        <name>ATP</name>
        <dbReference type="ChEBI" id="CHEBI:30616"/>
        <label>2</label>
    </ligand>
</feature>
<feature type="binding site" evidence="1">
    <location>
        <position position="740"/>
    </location>
    <ligand>
        <name>ATP</name>
        <dbReference type="ChEBI" id="CHEBI:30616"/>
        <label>2</label>
    </ligand>
</feature>
<feature type="binding site" evidence="1">
    <location>
        <position position="745"/>
    </location>
    <ligand>
        <name>ATP</name>
        <dbReference type="ChEBI" id="CHEBI:30616"/>
        <label>2</label>
    </ligand>
</feature>
<feature type="binding site" evidence="1">
    <location>
        <position position="770"/>
    </location>
    <ligand>
        <name>ATP</name>
        <dbReference type="ChEBI" id="CHEBI:30616"/>
        <label>2</label>
    </ligand>
</feature>
<feature type="binding site" evidence="1">
    <location>
        <position position="771"/>
    </location>
    <ligand>
        <name>ATP</name>
        <dbReference type="ChEBI" id="CHEBI:30616"/>
        <label>2</label>
    </ligand>
</feature>
<feature type="binding site" evidence="1">
    <location>
        <position position="772"/>
    </location>
    <ligand>
        <name>ATP</name>
        <dbReference type="ChEBI" id="CHEBI:30616"/>
        <label>2</label>
    </ligand>
</feature>
<feature type="binding site" evidence="1">
    <location>
        <position position="773"/>
    </location>
    <ligand>
        <name>ATP</name>
        <dbReference type="ChEBI" id="CHEBI:30616"/>
        <label>2</label>
    </ligand>
</feature>
<feature type="binding site" evidence="1">
    <location>
        <position position="813"/>
    </location>
    <ligand>
        <name>ATP</name>
        <dbReference type="ChEBI" id="CHEBI:30616"/>
        <label>2</label>
    </ligand>
</feature>
<feature type="binding site" evidence="1">
    <location>
        <position position="813"/>
    </location>
    <ligand>
        <name>Mg(2+)</name>
        <dbReference type="ChEBI" id="CHEBI:18420"/>
        <label>3</label>
    </ligand>
</feature>
<feature type="binding site" evidence="1">
    <location>
        <position position="813"/>
    </location>
    <ligand>
        <name>Mn(2+)</name>
        <dbReference type="ChEBI" id="CHEBI:29035"/>
        <label>3</label>
    </ligand>
</feature>
<feature type="binding site" evidence="1">
    <location>
        <position position="825"/>
    </location>
    <ligand>
        <name>ATP</name>
        <dbReference type="ChEBI" id="CHEBI:30616"/>
        <label>2</label>
    </ligand>
</feature>
<feature type="binding site" evidence="1">
    <location>
        <position position="825"/>
    </location>
    <ligand>
        <name>Mg(2+)</name>
        <dbReference type="ChEBI" id="CHEBI:18420"/>
        <label>3</label>
    </ligand>
</feature>
<feature type="binding site" evidence="1">
    <location>
        <position position="825"/>
    </location>
    <ligand>
        <name>Mg(2+)</name>
        <dbReference type="ChEBI" id="CHEBI:18420"/>
        <label>4</label>
    </ligand>
</feature>
<feature type="binding site" evidence="1">
    <location>
        <position position="825"/>
    </location>
    <ligand>
        <name>Mn(2+)</name>
        <dbReference type="ChEBI" id="CHEBI:29035"/>
        <label>3</label>
    </ligand>
</feature>
<feature type="binding site" evidence="1">
    <location>
        <position position="825"/>
    </location>
    <ligand>
        <name>Mn(2+)</name>
        <dbReference type="ChEBI" id="CHEBI:29035"/>
        <label>4</label>
    </ligand>
</feature>
<feature type="binding site" evidence="1">
    <location>
        <position position="827"/>
    </location>
    <ligand>
        <name>Mg(2+)</name>
        <dbReference type="ChEBI" id="CHEBI:18420"/>
        <label>4</label>
    </ligand>
</feature>
<feature type="binding site" evidence="1">
    <location>
        <position position="827"/>
    </location>
    <ligand>
        <name>Mn(2+)</name>
        <dbReference type="ChEBI" id="CHEBI:29035"/>
        <label>4</label>
    </ligand>
</feature>
<name>CARB_THEVO</name>
<evidence type="ECO:0000255" key="1">
    <source>
        <dbReference type="HAMAP-Rule" id="MF_01210"/>
    </source>
</evidence>
<dbReference type="EC" id="6.3.4.16" evidence="1"/>
<dbReference type="EC" id="6.3.5.5" evidence="1"/>
<dbReference type="EMBL" id="BA000011">
    <property type="protein sequence ID" value="BAB59959.1"/>
    <property type="molecule type" value="Genomic_DNA"/>
</dbReference>
<dbReference type="RefSeq" id="WP_010917061.1">
    <property type="nucleotide sequence ID" value="NC_002689.2"/>
</dbReference>
<dbReference type="SMR" id="Q97AJ3"/>
<dbReference type="STRING" id="273116.gene:9381607"/>
<dbReference type="PaxDb" id="273116-14325033"/>
<dbReference type="GeneID" id="1441909"/>
<dbReference type="KEGG" id="tvo:TVG0823863"/>
<dbReference type="eggNOG" id="arCOG01594">
    <property type="taxonomic scope" value="Archaea"/>
</dbReference>
<dbReference type="HOGENOM" id="CLU_000513_1_0_2"/>
<dbReference type="OrthoDB" id="85487at2157"/>
<dbReference type="PhylomeDB" id="Q97AJ3"/>
<dbReference type="UniPathway" id="UPA00068">
    <property type="reaction ID" value="UER00171"/>
</dbReference>
<dbReference type="UniPathway" id="UPA00070">
    <property type="reaction ID" value="UER00115"/>
</dbReference>
<dbReference type="Proteomes" id="UP000001017">
    <property type="component" value="Chromosome"/>
</dbReference>
<dbReference type="GO" id="GO:0005737">
    <property type="term" value="C:cytoplasm"/>
    <property type="evidence" value="ECO:0007669"/>
    <property type="project" value="TreeGrafter"/>
</dbReference>
<dbReference type="GO" id="GO:0005524">
    <property type="term" value="F:ATP binding"/>
    <property type="evidence" value="ECO:0007669"/>
    <property type="project" value="UniProtKB-UniRule"/>
</dbReference>
<dbReference type="GO" id="GO:0004087">
    <property type="term" value="F:carbamoyl-phosphate synthase (ammonia) activity"/>
    <property type="evidence" value="ECO:0007669"/>
    <property type="project" value="RHEA"/>
</dbReference>
<dbReference type="GO" id="GO:0004088">
    <property type="term" value="F:carbamoyl-phosphate synthase (glutamine-hydrolyzing) activity"/>
    <property type="evidence" value="ECO:0007669"/>
    <property type="project" value="UniProtKB-UniRule"/>
</dbReference>
<dbReference type="GO" id="GO:0046872">
    <property type="term" value="F:metal ion binding"/>
    <property type="evidence" value="ECO:0007669"/>
    <property type="project" value="UniProtKB-KW"/>
</dbReference>
<dbReference type="GO" id="GO:0044205">
    <property type="term" value="P:'de novo' UMP biosynthetic process"/>
    <property type="evidence" value="ECO:0007669"/>
    <property type="project" value="UniProtKB-UniRule"/>
</dbReference>
<dbReference type="GO" id="GO:0006541">
    <property type="term" value="P:glutamine metabolic process"/>
    <property type="evidence" value="ECO:0007669"/>
    <property type="project" value="TreeGrafter"/>
</dbReference>
<dbReference type="GO" id="GO:0006526">
    <property type="term" value="P:L-arginine biosynthetic process"/>
    <property type="evidence" value="ECO:0007669"/>
    <property type="project" value="UniProtKB-UniRule"/>
</dbReference>
<dbReference type="CDD" id="cd01424">
    <property type="entry name" value="MGS_CPS_II"/>
    <property type="match status" value="1"/>
</dbReference>
<dbReference type="FunFam" id="3.30.470.20:FF:000026">
    <property type="entry name" value="Carbamoyl-phosphate synthase large chain"/>
    <property type="match status" value="2"/>
</dbReference>
<dbReference type="FunFam" id="3.40.50.20:FF:000001">
    <property type="entry name" value="Carbamoyl-phosphate synthase large chain"/>
    <property type="match status" value="2"/>
</dbReference>
<dbReference type="Gene3D" id="3.40.50.20">
    <property type="match status" value="2"/>
</dbReference>
<dbReference type="Gene3D" id="3.30.1490.20">
    <property type="entry name" value="ATP-grasp fold, A domain"/>
    <property type="match status" value="2"/>
</dbReference>
<dbReference type="Gene3D" id="3.30.470.20">
    <property type="entry name" value="ATP-grasp fold, B domain"/>
    <property type="match status" value="2"/>
</dbReference>
<dbReference type="Gene3D" id="1.10.1030.10">
    <property type="entry name" value="Carbamoyl-phosphate synthetase, large subunit oligomerisation domain"/>
    <property type="match status" value="1"/>
</dbReference>
<dbReference type="Gene3D" id="3.40.50.1380">
    <property type="entry name" value="Methylglyoxal synthase-like domain"/>
    <property type="match status" value="1"/>
</dbReference>
<dbReference type="HAMAP" id="MF_01210_A">
    <property type="entry name" value="CPSase_L_chain_A"/>
    <property type="match status" value="1"/>
</dbReference>
<dbReference type="InterPro" id="IPR011761">
    <property type="entry name" value="ATP-grasp"/>
</dbReference>
<dbReference type="InterPro" id="IPR013815">
    <property type="entry name" value="ATP_grasp_subdomain_1"/>
</dbReference>
<dbReference type="InterPro" id="IPR006275">
    <property type="entry name" value="CarbamoylP_synth_lsu"/>
</dbReference>
<dbReference type="InterPro" id="IPR005480">
    <property type="entry name" value="CarbamoylP_synth_lsu_oligo"/>
</dbReference>
<dbReference type="InterPro" id="IPR036897">
    <property type="entry name" value="CarbamoylP_synth_lsu_oligo_sf"/>
</dbReference>
<dbReference type="InterPro" id="IPR005479">
    <property type="entry name" value="CbamoylP_synth_lsu-like_ATP-bd"/>
</dbReference>
<dbReference type="InterPro" id="IPR005483">
    <property type="entry name" value="CbamoylP_synth_lsu_CPSase_dom"/>
</dbReference>
<dbReference type="InterPro" id="IPR011607">
    <property type="entry name" value="MGS-like_dom"/>
</dbReference>
<dbReference type="InterPro" id="IPR036914">
    <property type="entry name" value="MGS-like_dom_sf"/>
</dbReference>
<dbReference type="InterPro" id="IPR033937">
    <property type="entry name" value="MGS_CPS_CarB"/>
</dbReference>
<dbReference type="InterPro" id="IPR016185">
    <property type="entry name" value="PreATP-grasp_dom_sf"/>
</dbReference>
<dbReference type="NCBIfam" id="TIGR01369">
    <property type="entry name" value="CPSaseII_lrg"/>
    <property type="match status" value="1"/>
</dbReference>
<dbReference type="NCBIfam" id="NF003671">
    <property type="entry name" value="PRK05294.1"/>
    <property type="match status" value="1"/>
</dbReference>
<dbReference type="NCBIfam" id="NF009455">
    <property type="entry name" value="PRK12815.1"/>
    <property type="match status" value="1"/>
</dbReference>
<dbReference type="PANTHER" id="PTHR11405:SF53">
    <property type="entry name" value="CARBAMOYL-PHOSPHATE SYNTHASE [AMMONIA], MITOCHONDRIAL"/>
    <property type="match status" value="1"/>
</dbReference>
<dbReference type="PANTHER" id="PTHR11405">
    <property type="entry name" value="CARBAMOYLTRANSFERASE FAMILY MEMBER"/>
    <property type="match status" value="1"/>
</dbReference>
<dbReference type="Pfam" id="PF02786">
    <property type="entry name" value="CPSase_L_D2"/>
    <property type="match status" value="2"/>
</dbReference>
<dbReference type="Pfam" id="PF02787">
    <property type="entry name" value="CPSase_L_D3"/>
    <property type="match status" value="1"/>
</dbReference>
<dbReference type="Pfam" id="PF02142">
    <property type="entry name" value="MGS"/>
    <property type="match status" value="1"/>
</dbReference>
<dbReference type="PRINTS" id="PR00098">
    <property type="entry name" value="CPSASE"/>
</dbReference>
<dbReference type="SMART" id="SM01096">
    <property type="entry name" value="CPSase_L_D3"/>
    <property type="match status" value="1"/>
</dbReference>
<dbReference type="SMART" id="SM00851">
    <property type="entry name" value="MGS"/>
    <property type="match status" value="1"/>
</dbReference>
<dbReference type="SUPFAM" id="SSF48108">
    <property type="entry name" value="Carbamoyl phosphate synthetase, large subunit connection domain"/>
    <property type="match status" value="1"/>
</dbReference>
<dbReference type="SUPFAM" id="SSF56059">
    <property type="entry name" value="Glutathione synthetase ATP-binding domain-like"/>
    <property type="match status" value="2"/>
</dbReference>
<dbReference type="SUPFAM" id="SSF52335">
    <property type="entry name" value="Methylglyoxal synthase-like"/>
    <property type="match status" value="1"/>
</dbReference>
<dbReference type="SUPFAM" id="SSF52440">
    <property type="entry name" value="PreATP-grasp domain"/>
    <property type="match status" value="2"/>
</dbReference>
<dbReference type="PROSITE" id="PS50975">
    <property type="entry name" value="ATP_GRASP"/>
    <property type="match status" value="2"/>
</dbReference>
<dbReference type="PROSITE" id="PS00867">
    <property type="entry name" value="CPSASE_2"/>
    <property type="match status" value="1"/>
</dbReference>
<dbReference type="PROSITE" id="PS51855">
    <property type="entry name" value="MGS"/>
    <property type="match status" value="1"/>
</dbReference>
<comment type="function">
    <text evidence="1">Large subunit of the glutamine-dependent carbamoyl phosphate synthetase (CPSase). CPSase catalyzes the formation of carbamoyl phosphate from the ammonia moiety of glutamine, carbonate, and phosphate donated by ATP, constituting the first step of 2 biosynthetic pathways, one leading to arginine and/or urea and the other to pyrimidine nucleotides. The large subunit (synthetase) binds the substrates ammonia (free or transferred from glutamine from the small subunit), hydrogencarbonate and ATP and carries out an ATP-coupled ligase reaction, activating hydrogencarbonate by forming carboxy phosphate which reacts with ammonia to form carbamoyl phosphate.</text>
</comment>
<comment type="catalytic activity">
    <reaction evidence="1">
        <text>hydrogencarbonate + L-glutamine + 2 ATP + H2O = carbamoyl phosphate + L-glutamate + 2 ADP + phosphate + 2 H(+)</text>
        <dbReference type="Rhea" id="RHEA:18633"/>
        <dbReference type="ChEBI" id="CHEBI:15377"/>
        <dbReference type="ChEBI" id="CHEBI:15378"/>
        <dbReference type="ChEBI" id="CHEBI:17544"/>
        <dbReference type="ChEBI" id="CHEBI:29985"/>
        <dbReference type="ChEBI" id="CHEBI:30616"/>
        <dbReference type="ChEBI" id="CHEBI:43474"/>
        <dbReference type="ChEBI" id="CHEBI:58228"/>
        <dbReference type="ChEBI" id="CHEBI:58359"/>
        <dbReference type="ChEBI" id="CHEBI:456216"/>
        <dbReference type="EC" id="6.3.5.5"/>
    </reaction>
</comment>
<comment type="catalytic activity">
    <molecule>Carbamoyl phosphate synthase large chain</molecule>
    <reaction evidence="1">
        <text>hydrogencarbonate + NH4(+) + 2 ATP = carbamoyl phosphate + 2 ADP + phosphate + 2 H(+)</text>
        <dbReference type="Rhea" id="RHEA:18029"/>
        <dbReference type="ChEBI" id="CHEBI:15378"/>
        <dbReference type="ChEBI" id="CHEBI:17544"/>
        <dbReference type="ChEBI" id="CHEBI:28938"/>
        <dbReference type="ChEBI" id="CHEBI:30616"/>
        <dbReference type="ChEBI" id="CHEBI:43474"/>
        <dbReference type="ChEBI" id="CHEBI:58228"/>
        <dbReference type="ChEBI" id="CHEBI:456216"/>
        <dbReference type="EC" id="6.3.4.16"/>
    </reaction>
</comment>
<comment type="cofactor">
    <cofactor evidence="1">
        <name>Mg(2+)</name>
        <dbReference type="ChEBI" id="CHEBI:18420"/>
    </cofactor>
    <cofactor evidence="1">
        <name>Mn(2+)</name>
        <dbReference type="ChEBI" id="CHEBI:29035"/>
    </cofactor>
    <text evidence="1">Binds 4 Mg(2+) or Mn(2+) ions per subunit.</text>
</comment>
<comment type="pathway">
    <text evidence="1">Amino-acid biosynthesis; L-arginine biosynthesis; carbamoyl phosphate from bicarbonate: step 1/1.</text>
</comment>
<comment type="pathway">
    <text evidence="1">Pyrimidine metabolism; UMP biosynthesis via de novo pathway; (S)-dihydroorotate from bicarbonate: step 1/3.</text>
</comment>
<comment type="subunit">
    <text evidence="1">Composed of two chains; the small (or glutamine) chain promotes the hydrolysis of glutamine to ammonia, which is used by the large (or ammonia) chain to synthesize carbamoyl phosphate. Tetramer of heterodimers (alpha,beta)4.</text>
</comment>
<comment type="domain">
    <text evidence="1">The large subunit is composed of 2 ATP-grasp domains that are involved in binding the 2 ATP molecules needed for carbamoyl phosphate synthesis. The N-terminal ATP-grasp domain (referred to as the carboxyphosphate synthetic component) catalyzes the ATP-dependent phosphorylation of hydrogencarbonate to carboxyphosphate and the subsequent nucleophilic attack by ammonia to form a carbamate intermediate. The C-terminal ATP-grasp domain (referred to as the carbamoyl phosphate synthetic component) then catalyzes the phosphorylation of carbamate with the second ATP to form the end product carbamoyl phosphate. The reactive and unstable enzyme intermediates are sequentially channeled from one active site to the next through the interior of the protein over a distance of at least 96 A.</text>
</comment>
<comment type="similarity">
    <text evidence="1">Belongs to the CarB family.</text>
</comment>